<feature type="chain" id="PRO_0000234629" description="ABC transporter G family member 30">
    <location>
        <begin position="1"/>
        <end position="1400"/>
    </location>
</feature>
<feature type="transmembrane region" description="Helical" evidence="2">
    <location>
        <begin position="510"/>
        <end position="530"/>
    </location>
</feature>
<feature type="transmembrane region" description="Helical" evidence="2">
    <location>
        <begin position="553"/>
        <end position="573"/>
    </location>
</feature>
<feature type="transmembrane region" description="Helical" evidence="2">
    <location>
        <begin position="582"/>
        <end position="602"/>
    </location>
</feature>
<feature type="transmembrane region" description="Helical" evidence="2">
    <location>
        <begin position="628"/>
        <end position="648"/>
    </location>
</feature>
<feature type="transmembrane region" description="Helical" evidence="2">
    <location>
        <begin position="652"/>
        <end position="672"/>
    </location>
</feature>
<feature type="transmembrane region" description="Helical" evidence="2">
    <location>
        <begin position="679"/>
        <end position="699"/>
    </location>
</feature>
<feature type="transmembrane region" description="Helical" evidence="2">
    <location>
        <begin position="738"/>
        <end position="758"/>
    </location>
</feature>
<feature type="transmembrane region" description="Helical" evidence="2">
    <location>
        <begin position="1144"/>
        <end position="1164"/>
    </location>
</feature>
<feature type="transmembrane region" description="Helical" evidence="2">
    <location>
        <begin position="1179"/>
        <end position="1199"/>
    </location>
</feature>
<feature type="transmembrane region" description="Helical" evidence="2">
    <location>
        <begin position="1228"/>
        <end position="1248"/>
    </location>
</feature>
<feature type="transmembrane region" description="Helical" evidence="2">
    <location>
        <begin position="1263"/>
        <end position="1283"/>
    </location>
</feature>
<feature type="transmembrane region" description="Helical" evidence="2">
    <location>
        <begin position="1289"/>
        <end position="1309"/>
    </location>
</feature>
<feature type="transmembrane region" description="Helical" evidence="2">
    <location>
        <begin position="1317"/>
        <end position="1337"/>
    </location>
</feature>
<feature type="transmembrane region" description="Helical" evidence="2">
    <location>
        <begin position="1372"/>
        <end position="1392"/>
    </location>
</feature>
<feature type="domain" description="ABC transporter 1" evidence="3">
    <location>
        <begin position="141"/>
        <end position="414"/>
    </location>
</feature>
<feature type="domain" description="ABC transmembrane type-2 1" evidence="2">
    <location>
        <begin position="492"/>
        <end position="704"/>
    </location>
</feature>
<feature type="domain" description="ABC transporter 2" evidence="3">
    <location>
        <begin position="808"/>
        <end position="1053"/>
    </location>
</feature>
<feature type="domain" description="ABC transmembrane type-2 2" evidence="2">
    <location>
        <begin position="1125"/>
        <end position="1339"/>
    </location>
</feature>
<feature type="binding site" evidence="3">
    <location>
        <begin position="174"/>
        <end position="181"/>
    </location>
    <ligand>
        <name>ATP</name>
        <dbReference type="ChEBI" id="CHEBI:30616"/>
        <label>1</label>
    </ligand>
</feature>
<feature type="binding site" evidence="3">
    <location>
        <begin position="845"/>
        <end position="852"/>
    </location>
    <ligand>
        <name>ATP</name>
        <dbReference type="ChEBI" id="CHEBI:30616"/>
        <label>2</label>
    </ligand>
</feature>
<feature type="glycosylation site" description="N-linked (GlcNAc...) asparagine" evidence="4">
    <location>
        <position position="116"/>
    </location>
</feature>
<feature type="glycosylation site" description="N-linked (GlcNAc...) asparagine" evidence="4">
    <location>
        <position position="472"/>
    </location>
</feature>
<feature type="glycosylation site" description="N-linked (GlcNAc...) asparagine" evidence="4">
    <location>
        <position position="899"/>
    </location>
</feature>
<feature type="glycosylation site" description="N-linked (GlcNAc...) asparagine" evidence="4">
    <location>
        <position position="1040"/>
    </location>
</feature>
<feature type="splice variant" id="VSP_018392" description="In isoform 2." evidence="8">
    <location>
        <begin position="1"/>
        <end position="640"/>
    </location>
</feature>
<keyword id="KW-0938">Abscisic acid signaling pathway</keyword>
<keyword id="KW-0025">Alternative splicing</keyword>
<keyword id="KW-0067">ATP-binding</keyword>
<keyword id="KW-1003">Cell membrane</keyword>
<keyword id="KW-0325">Glycoprotein</keyword>
<keyword id="KW-0472">Membrane</keyword>
<keyword id="KW-0547">Nucleotide-binding</keyword>
<keyword id="KW-1185">Reference proteome</keyword>
<keyword id="KW-0677">Repeat</keyword>
<keyword id="KW-0812">Transmembrane</keyword>
<keyword id="KW-1133">Transmembrane helix</keyword>
<keyword id="KW-0813">Transport</keyword>
<proteinExistence type="evidence at protein level"/>
<sequence>MIQTGEEDEEKATSLEVEFASGNGVDDEEELRLQWATVERLPTFKRVTTALLARDEVSGKGRVIDVTRLEGAERRLLIEMLVKQIEDDNLRLLRKIRKRIDKVGIELPTVEVRFNNLSVEAECQVIHGKPIPTLWNTIKGLLSEFICSKKETKIGILKGVSGIVRPGRMTLLLGPPGCGKTTLLQALSGKFSDSVKVGGEVCYNGCSLSEFIPEKTSSYISQNDLHIPELSVRETLDFSACCQGIGSRMEIMKEISRMEKLQEIIPDPAVDAYMKATSVEGLKNNLQTDYILKILGLDICADTRVGDATRPGISGGEKRRLTTGELVVGPATTLFMDEISNGLDSSTTFQIVSCLQQLAHIAEATILISLLQPAPETFELFDDVILMGEGKIIYHAPRADICRFFEEFGFKCPERKGVADFLQEIMSKKDQEQYWCHRDKPYSYISVDSFINKFKESNLGLLLKEELSKPFNKSQTRKDGLCYKKYSLGKWEMLKACSRREFLLMKRNSFIYLFKSALLVFNALVTMTVFLQVGATTDSLHGNYLMGSLFTALFRLLADGLPELTLTISRLGVFCKQKDLYFYPAWAYAIPSIILKIPLSVLDSFIWTLLTYYVIGYSPEVKRFFLQFLILSTFNLSCVSMFRAIAAIFRTIIASTITGAISILVLSLFGGFVIPKSSMPAWLGWGFWLSPLSYAEIGLTANEFFSPRWSKVISSKTTAGEQMLDIRGLNFGRHSYWTAFGALVGFVLFFNALYVLALTYQNNPQRSRAIISHEKYSRPIEEDFKPCPKITSRAKTGKIILPFKPLTVTFQNVQYYIETPQGKTRQLLSDITGALKPGVLTSLMGVSGAGKTTLLDVLSGRKTRGIIKGEIKVGGYPKVQETFARVSGYCEQFDIHSPNITVEESLKYSAWLRLPYNIDSKTKNELVKEVLETVELDDIKDSVVGLPGISGLSIEQRKRLTIAVELVANPSIIFMDEPTTGLDARAAAIVMRAVKNVAETGRTVVCTIHQPSIDIFETFDELILMKNGGQLVYYGPPGQNSSKVIEYFESFSGLPKIQKNCNPATWILDITSKSAEEKLGIDFSQSYKDSTLYKQNKMVVEQLSSASLGSEALRFPSQFSQTAWVQLKACLWKQHYSYWRNPSHNITRIVFILLDSTLCGLLFWQKAEDINNQQDLISIFGSMYTLVVFPGMNNCAAVINFIAAERNVFYRERFARMYSSWAYSFSQVLIEVPYSLLQSLLCTIIVYPTIGYHMSVYKMFWSLYSIFCSLLIFNYSGMLMVALTPNIHMAVTLRSSFFSMLNLFAGFVIPKQKIPKWWIWMYYLSPTSWVLEGLLSSQYGDVDKEILVFGEKKRVSAFLEDYFGYKHESLAVVAFVLIAYPIIVATLFAFFMSKLSFQKK</sequence>
<name>AB30G_ARATH</name>
<gene>
    <name evidence="11" type="primary">ABCG30</name>
    <name evidence="9 10" type="synonym">PDR2</name>
    <name evidence="13" type="ordered locus">At4g15230/At4g15220</name>
    <name evidence="14 15" type="ORF">dl3660w/dl3655w</name>
    <name evidence="16" type="ORF">FCAALL.241</name>
</gene>
<accession>Q8GZ52</accession>
<accession>O23376</accession>
<accession>O23377</accession>
<accession>Q7PC89</accession>
<protein>
    <recommendedName>
        <fullName evidence="11">ABC transporter G family member 30</fullName>
        <shortName evidence="11">ABC transporter ABCG.30</shortName>
        <shortName evidence="11">AtABCG30</shortName>
    </recommendedName>
    <alternativeName>
        <fullName evidence="9 10">Pleiotropic drug resistance protein 2</fullName>
        <shortName evidence="9 10">AtPDR2</shortName>
    </alternativeName>
</protein>
<comment type="function">
    <text evidence="1 6 7">Together with ABCG40, import into the embryo the abscisic acid (ABA) delivered from the endosperm via ABCG25 and ABCG31-mediated export to suppress radicle extension and subsequent embryonic growth (PubMed:26334616). Involved in root secretion of phytochemicals (phenolics and sugars) which regulate soil microbiota, influencing both fungal and bacterial communities (PubMed:19854857). May be a general defense protein (By similarity).</text>
</comment>
<comment type="catalytic activity">
    <reaction evidence="7">
        <text>abscisate(out) + ATP + H2O = abscisate(in) + ADP + phosphate + H(+)</text>
        <dbReference type="Rhea" id="RHEA:63960"/>
        <dbReference type="ChEBI" id="CHEBI:15377"/>
        <dbReference type="ChEBI" id="CHEBI:15378"/>
        <dbReference type="ChEBI" id="CHEBI:30616"/>
        <dbReference type="ChEBI" id="CHEBI:43474"/>
        <dbReference type="ChEBI" id="CHEBI:62432"/>
        <dbReference type="ChEBI" id="CHEBI:456216"/>
    </reaction>
    <physiologicalReaction direction="left-to-right" evidence="7">
        <dbReference type="Rhea" id="RHEA:63961"/>
    </physiologicalReaction>
</comment>
<comment type="subcellular location">
    <subcellularLocation>
        <location evidence="7">Cell membrane</location>
        <topology evidence="2">Multi-pass membrane protein</topology>
    </subcellularLocation>
</comment>
<comment type="alternative products">
    <event type="alternative splicing"/>
    <isoform>
        <id>Q8GZ52-1</id>
        <name>1</name>
        <sequence type="displayed"/>
    </isoform>
    <isoform>
        <id>Q8GZ52-2</id>
        <name>2</name>
        <sequence type="described" ref="VSP_018392"/>
    </isoform>
</comment>
<comment type="tissue specificity">
    <text evidence="5 7">Confined to roots (PubMed:12430018). In seeds, mainly expressed in the embryo and, to a lesser extent, in the endosperm (PubMed:26334616).</text>
</comment>
<comment type="induction">
    <text evidence="5">Repressed by cold/dark treatment.</text>
</comment>
<comment type="disruption phenotype">
    <text evidence="6 7">Early seeds germination on imbibition without stratification, and reduced abscisic acid (ABA)-mediated inhibition of stratified seeds germination (PubMed:26334616). Altered root exudation of phytochemicals, with increased phenolics (e.g. benzoic acid, salicylic acid, syringic acid, tartaric acid, lactic acid, alpha-linolenic acid, cyanidin, sinapoyl malate, valine and indole 3-acetic acid) and decreased sugars levels (e.g. raffinose, glucose, fructose and mannitol), leading to an overhaul of natural soil microbiota, including both fungal and bacterial communities; this phenotype is associated with an up-regulation of some genes involved in biosynthesis and transport of secondary metabolites, but the down-regulation of some sugar transporters (PubMed:19854857).</text>
</comment>
<comment type="similarity">
    <text evidence="12">Belongs to the ABC transporter superfamily. ABCG family. PDR (TC 3.A.1.205) subfamily.</text>
</comment>
<comment type="sequence caution" evidence="12">
    <conflict type="erroneous gene model prediction">
        <sequence resource="EMBL-CDS" id="CAB10301"/>
    </conflict>
    <text>Was originally thought to correspond to two different genes At4g15220 and At4g15230.</text>
</comment>
<comment type="sequence caution" evidence="12">
    <conflict type="erroneous gene model prediction">
        <sequence resource="EMBL-CDS" id="CAB45997"/>
    </conflict>
    <text>Was originally thought to correspond to two different genes At4g15220 and At4g15230.</text>
</comment>
<comment type="sequence caution" evidence="12">
    <conflict type="erroneous gene model prediction">
        <sequence resource="EMBL-CDS" id="CAB78564"/>
    </conflict>
    <text>Was originally thought to correspond to two different genes At4g15220 and At4g15230.</text>
</comment>
<comment type="sequence caution" evidence="12">
    <conflict type="erroneous gene model prediction">
        <sequence resource="EMBL-CDS" id="CAB78565"/>
    </conflict>
    <text>Was originally thought to correspond to two different genes At4g15220 and At4g15230.</text>
</comment>
<evidence type="ECO:0000250" key="1"/>
<evidence type="ECO:0000255" key="2"/>
<evidence type="ECO:0000255" key="3">
    <source>
        <dbReference type="PROSITE-ProRule" id="PRU00434"/>
    </source>
</evidence>
<evidence type="ECO:0000255" key="4">
    <source>
        <dbReference type="PROSITE-ProRule" id="PRU00498"/>
    </source>
</evidence>
<evidence type="ECO:0000269" key="5">
    <source>
    </source>
</evidence>
<evidence type="ECO:0000269" key="6">
    <source>
    </source>
</evidence>
<evidence type="ECO:0000269" key="7">
    <source>
    </source>
</evidence>
<evidence type="ECO:0000303" key="8">
    <source>
    </source>
</evidence>
<evidence type="ECO:0000303" key="9">
    <source>
    </source>
</evidence>
<evidence type="ECO:0000303" key="10">
    <source>
    </source>
</evidence>
<evidence type="ECO:0000303" key="11">
    <source>
    </source>
</evidence>
<evidence type="ECO:0000305" key="12"/>
<evidence type="ECO:0000312" key="13">
    <source>
        <dbReference type="Araport" id="AT4G15230"/>
    </source>
</evidence>
<evidence type="ECO:0000312" key="14">
    <source>
        <dbReference type="EMBL" id="CAB10301.1"/>
    </source>
</evidence>
<evidence type="ECO:0000312" key="15">
    <source>
        <dbReference type="EMBL" id="CAB45997.1"/>
    </source>
</evidence>
<evidence type="ECO:0000312" key="16">
    <source>
        <dbReference type="EMBL" id="CAB78564.1"/>
    </source>
</evidence>
<organism>
    <name type="scientific">Arabidopsis thaliana</name>
    <name type="common">Mouse-ear cress</name>
    <dbReference type="NCBI Taxonomy" id="3702"/>
    <lineage>
        <taxon>Eukaryota</taxon>
        <taxon>Viridiplantae</taxon>
        <taxon>Streptophyta</taxon>
        <taxon>Embryophyta</taxon>
        <taxon>Tracheophyta</taxon>
        <taxon>Spermatophyta</taxon>
        <taxon>Magnoliopsida</taxon>
        <taxon>eudicotyledons</taxon>
        <taxon>Gunneridae</taxon>
        <taxon>Pentapetalae</taxon>
        <taxon>rosids</taxon>
        <taxon>malvids</taxon>
        <taxon>Brassicales</taxon>
        <taxon>Brassicaceae</taxon>
        <taxon>Camelineae</taxon>
        <taxon>Arabidopsis</taxon>
    </lineage>
</organism>
<dbReference type="EMBL" id="Z97338">
    <property type="protein sequence ID" value="CAB10301.1"/>
    <property type="status" value="ALT_SEQ"/>
    <property type="molecule type" value="Genomic_DNA"/>
</dbReference>
<dbReference type="EMBL" id="Z97338">
    <property type="protein sequence ID" value="CAB45997.1"/>
    <property type="status" value="ALT_SEQ"/>
    <property type="molecule type" value="Genomic_DNA"/>
</dbReference>
<dbReference type="EMBL" id="AL161540">
    <property type="protein sequence ID" value="CAB78564.1"/>
    <property type="status" value="ALT_SEQ"/>
    <property type="molecule type" value="Genomic_DNA"/>
</dbReference>
<dbReference type="EMBL" id="AL161540">
    <property type="protein sequence ID" value="CAB78565.1"/>
    <property type="status" value="ALT_SEQ"/>
    <property type="molecule type" value="Genomic_DNA"/>
</dbReference>
<dbReference type="EMBL" id="CP002687">
    <property type="protein sequence ID" value="AEE83571.1"/>
    <property type="molecule type" value="Genomic_DNA"/>
</dbReference>
<dbReference type="EMBL" id="CP002687">
    <property type="protein sequence ID" value="ANM66937.1"/>
    <property type="molecule type" value="Genomic_DNA"/>
</dbReference>
<dbReference type="EMBL" id="AK117203">
    <property type="protein sequence ID" value="BAC41879.1"/>
    <property type="molecule type" value="mRNA"/>
</dbReference>
<dbReference type="EMBL" id="BK001000">
    <property type="protein sequence ID" value="DAA00869.1"/>
    <property type="molecule type" value="Genomic_DNA"/>
</dbReference>
<dbReference type="PIR" id="C71416">
    <property type="entry name" value="C71416"/>
</dbReference>
<dbReference type="PIR" id="D71416">
    <property type="entry name" value="D71416"/>
</dbReference>
<dbReference type="PIR" id="G85167">
    <property type="entry name" value="G85167"/>
</dbReference>
<dbReference type="RefSeq" id="NP_001319944.1">
    <molecule id="Q8GZ52-1"/>
    <property type="nucleotide sequence ID" value="NM_001341010.1"/>
</dbReference>
<dbReference type="RefSeq" id="NP_193258.3">
    <molecule id="Q8GZ52-1"/>
    <property type="nucleotide sequence ID" value="NM_117611.5"/>
</dbReference>
<dbReference type="SMR" id="Q8GZ52"/>
<dbReference type="BioGRID" id="12484">
    <property type="interactions" value="1"/>
</dbReference>
<dbReference type="FunCoup" id="Q8GZ52">
    <property type="interactions" value="221"/>
</dbReference>
<dbReference type="STRING" id="3702.Q8GZ52"/>
<dbReference type="TCDB" id="3.A.1.205.28">
    <property type="family name" value="the atp-binding cassette (abc) superfamily"/>
</dbReference>
<dbReference type="GlyCosmos" id="Q8GZ52">
    <property type="glycosylation" value="4 sites, No reported glycans"/>
</dbReference>
<dbReference type="GlyGen" id="Q8GZ52">
    <property type="glycosylation" value="4 sites"/>
</dbReference>
<dbReference type="PaxDb" id="3702-AT4G15230.1"/>
<dbReference type="ProteomicsDB" id="245153">
    <molecule id="Q8GZ52-1"/>
</dbReference>
<dbReference type="EnsemblPlants" id="AT4G15230.1">
    <molecule id="Q8GZ52-1"/>
    <property type="protein sequence ID" value="AT4G15230.1"/>
    <property type="gene ID" value="AT4G15230"/>
</dbReference>
<dbReference type="EnsemblPlants" id="AT4G15230.3">
    <molecule id="Q8GZ52-1"/>
    <property type="protein sequence ID" value="AT4G15230.3"/>
    <property type="gene ID" value="AT4G15230"/>
</dbReference>
<dbReference type="GeneID" id="827187"/>
<dbReference type="Gramene" id="AT4G15230.1">
    <molecule id="Q8GZ52-1"/>
    <property type="protein sequence ID" value="AT4G15230.1"/>
    <property type="gene ID" value="AT4G15230"/>
</dbReference>
<dbReference type="Gramene" id="AT4G15230.3">
    <molecule id="Q8GZ52-1"/>
    <property type="protein sequence ID" value="AT4G15230.3"/>
    <property type="gene ID" value="AT4G15230"/>
</dbReference>
<dbReference type="KEGG" id="ath:AT4G15230"/>
<dbReference type="Araport" id="AT4G15230"/>
<dbReference type="TAIR" id="AT4G15230">
    <property type="gene designation" value="ABCG30"/>
</dbReference>
<dbReference type="eggNOG" id="KOG0065">
    <property type="taxonomic scope" value="Eukaryota"/>
</dbReference>
<dbReference type="HOGENOM" id="CLU_000604_35_6_1"/>
<dbReference type="InParanoid" id="Q8GZ52"/>
<dbReference type="PRO" id="PR:Q8GZ52"/>
<dbReference type="Proteomes" id="UP000006548">
    <property type="component" value="Chromosome 4"/>
</dbReference>
<dbReference type="ExpressionAtlas" id="Q8GZ52">
    <property type="expression patterns" value="baseline and differential"/>
</dbReference>
<dbReference type="GO" id="GO:0005886">
    <property type="term" value="C:plasma membrane"/>
    <property type="evidence" value="ECO:0000314"/>
    <property type="project" value="UniProtKB"/>
</dbReference>
<dbReference type="GO" id="GO:0140359">
    <property type="term" value="F:ABC-type transporter activity"/>
    <property type="evidence" value="ECO:0007669"/>
    <property type="project" value="InterPro"/>
</dbReference>
<dbReference type="GO" id="GO:0005524">
    <property type="term" value="F:ATP binding"/>
    <property type="evidence" value="ECO:0007669"/>
    <property type="project" value="UniProtKB-KW"/>
</dbReference>
<dbReference type="GO" id="GO:0016887">
    <property type="term" value="F:ATP hydrolysis activity"/>
    <property type="evidence" value="ECO:0007669"/>
    <property type="project" value="InterPro"/>
</dbReference>
<dbReference type="GO" id="GO:0042626">
    <property type="term" value="F:ATPase-coupled transmembrane transporter activity"/>
    <property type="evidence" value="ECO:0000315"/>
    <property type="project" value="UniProtKB"/>
</dbReference>
<dbReference type="GO" id="GO:0015562">
    <property type="term" value="F:efflux transmembrane transporter activity"/>
    <property type="evidence" value="ECO:0000315"/>
    <property type="project" value="UniProtKB"/>
</dbReference>
<dbReference type="GO" id="GO:0080168">
    <property type="term" value="P:abscisic acid transport"/>
    <property type="evidence" value="ECO:0000314"/>
    <property type="project" value="UniProtKB"/>
</dbReference>
<dbReference type="GO" id="GO:0009738">
    <property type="term" value="P:abscisic acid-activated signaling pathway"/>
    <property type="evidence" value="ECO:0000315"/>
    <property type="project" value="UniProtKB"/>
</dbReference>
<dbReference type="GO" id="GO:0033231">
    <property type="term" value="P:carbohydrate export"/>
    <property type="evidence" value="ECO:0000315"/>
    <property type="project" value="TAIR"/>
</dbReference>
<dbReference type="GO" id="GO:0098657">
    <property type="term" value="P:import into cell"/>
    <property type="evidence" value="ECO:0000315"/>
    <property type="project" value="UniProtKB"/>
</dbReference>
<dbReference type="GO" id="GO:0010496">
    <property type="term" value="P:intercellular transport"/>
    <property type="evidence" value="ECO:0000315"/>
    <property type="project" value="UniProtKB"/>
</dbReference>
<dbReference type="GO" id="GO:0048581">
    <property type="term" value="P:negative regulation of post-embryonic development"/>
    <property type="evidence" value="ECO:0000315"/>
    <property type="project" value="UniProtKB"/>
</dbReference>
<dbReference type="GO" id="GO:0055085">
    <property type="term" value="P:transmembrane transport"/>
    <property type="evidence" value="ECO:0000315"/>
    <property type="project" value="UniProtKB"/>
</dbReference>
<dbReference type="CDD" id="cd03232">
    <property type="entry name" value="ABCG_PDR_domain2"/>
    <property type="match status" value="1"/>
</dbReference>
<dbReference type="FunFam" id="3.40.50.300:FF:000157">
    <property type="entry name" value="ABC transporter G family member 34"/>
    <property type="match status" value="1"/>
</dbReference>
<dbReference type="FunFam" id="3.40.50.300:FF:000532">
    <property type="entry name" value="ABC transporter G family member 34"/>
    <property type="match status" value="1"/>
</dbReference>
<dbReference type="Gene3D" id="3.40.50.300">
    <property type="entry name" value="P-loop containing nucleotide triphosphate hydrolases"/>
    <property type="match status" value="2"/>
</dbReference>
<dbReference type="InterPro" id="IPR003593">
    <property type="entry name" value="AAA+_ATPase"/>
</dbReference>
<dbReference type="InterPro" id="IPR013525">
    <property type="entry name" value="ABC2_TM"/>
</dbReference>
<dbReference type="InterPro" id="IPR003439">
    <property type="entry name" value="ABC_transporter-like_ATP-bd"/>
</dbReference>
<dbReference type="InterPro" id="IPR043926">
    <property type="entry name" value="ABCG_dom"/>
</dbReference>
<dbReference type="InterPro" id="IPR034003">
    <property type="entry name" value="ABCG_PDR_2"/>
</dbReference>
<dbReference type="InterPro" id="IPR027417">
    <property type="entry name" value="P-loop_NTPase"/>
</dbReference>
<dbReference type="InterPro" id="IPR013581">
    <property type="entry name" value="PDR_assoc"/>
</dbReference>
<dbReference type="PANTHER" id="PTHR19241">
    <property type="entry name" value="ATP-BINDING CASSETTE TRANSPORTER"/>
    <property type="match status" value="1"/>
</dbReference>
<dbReference type="Pfam" id="PF01061">
    <property type="entry name" value="ABC2_membrane"/>
    <property type="match status" value="2"/>
</dbReference>
<dbReference type="Pfam" id="PF19055">
    <property type="entry name" value="ABC2_membrane_7"/>
    <property type="match status" value="1"/>
</dbReference>
<dbReference type="Pfam" id="PF00005">
    <property type="entry name" value="ABC_tran"/>
    <property type="match status" value="2"/>
</dbReference>
<dbReference type="Pfam" id="PF08370">
    <property type="entry name" value="PDR_assoc"/>
    <property type="match status" value="1"/>
</dbReference>
<dbReference type="SMART" id="SM00382">
    <property type="entry name" value="AAA"/>
    <property type="match status" value="2"/>
</dbReference>
<dbReference type="SUPFAM" id="SSF52540">
    <property type="entry name" value="P-loop containing nucleoside triphosphate hydrolases"/>
    <property type="match status" value="2"/>
</dbReference>
<dbReference type="PROSITE" id="PS50893">
    <property type="entry name" value="ABC_TRANSPORTER_2"/>
    <property type="match status" value="2"/>
</dbReference>
<reference key="1">
    <citation type="journal article" date="1998" name="Nature">
        <title>Analysis of 1.9 Mb of contiguous sequence from chromosome 4 of Arabidopsis thaliana.</title>
        <authorList>
            <person name="Bevan M."/>
            <person name="Bancroft I."/>
            <person name="Bent E."/>
            <person name="Love K."/>
            <person name="Goodman H.M."/>
            <person name="Dean C."/>
            <person name="Bergkamp R."/>
            <person name="Dirkse W."/>
            <person name="van Staveren M."/>
            <person name="Stiekema W."/>
            <person name="Drost L."/>
            <person name="Ridley P."/>
            <person name="Hudson S.-A."/>
            <person name="Patel K."/>
            <person name="Murphy G."/>
            <person name="Piffanelli P."/>
            <person name="Wedler H."/>
            <person name="Wedler E."/>
            <person name="Wambutt R."/>
            <person name="Weitzenegger T."/>
            <person name="Pohl T."/>
            <person name="Terryn N."/>
            <person name="Gielen J."/>
            <person name="Villarroel R."/>
            <person name="De Clercq R."/>
            <person name="van Montagu M."/>
            <person name="Lecharny A."/>
            <person name="Aubourg S."/>
            <person name="Gy I."/>
            <person name="Kreis M."/>
            <person name="Lao N."/>
            <person name="Kavanagh T."/>
            <person name="Hempel S."/>
            <person name="Kotter P."/>
            <person name="Entian K.-D."/>
            <person name="Rieger M."/>
            <person name="Schaefer M."/>
            <person name="Funk B."/>
            <person name="Mueller-Auer S."/>
            <person name="Silvey M."/>
            <person name="James R."/>
            <person name="Monfort A."/>
            <person name="Pons A."/>
            <person name="Puigdomenech P."/>
            <person name="Douka A."/>
            <person name="Voukelatou E."/>
            <person name="Milioni D."/>
            <person name="Hatzopoulos P."/>
            <person name="Piravandi E."/>
            <person name="Obermaier B."/>
            <person name="Hilbert H."/>
            <person name="Duesterhoeft A."/>
            <person name="Moores T."/>
            <person name="Jones J.D.G."/>
            <person name="Eneva T."/>
            <person name="Palme K."/>
            <person name="Benes V."/>
            <person name="Rechmann S."/>
            <person name="Ansorge W."/>
            <person name="Cooke R."/>
            <person name="Berger C."/>
            <person name="Delseny M."/>
            <person name="Voet M."/>
            <person name="Volckaert G."/>
            <person name="Mewes H.-W."/>
            <person name="Klosterman S."/>
            <person name="Schueller C."/>
            <person name="Chalwatzis N."/>
        </authorList>
    </citation>
    <scope>NUCLEOTIDE SEQUENCE [LARGE SCALE GENOMIC DNA]</scope>
    <source>
        <strain>cv. Columbia</strain>
    </source>
</reference>
<reference key="2">
    <citation type="journal article" date="1999" name="Nature">
        <title>Sequence and analysis of chromosome 4 of the plant Arabidopsis thaliana.</title>
        <authorList>
            <person name="Mayer K.F.X."/>
            <person name="Schueller C."/>
            <person name="Wambutt R."/>
            <person name="Murphy G."/>
            <person name="Volckaert G."/>
            <person name="Pohl T."/>
            <person name="Duesterhoeft A."/>
            <person name="Stiekema W."/>
            <person name="Entian K.-D."/>
            <person name="Terryn N."/>
            <person name="Harris B."/>
            <person name="Ansorge W."/>
            <person name="Brandt P."/>
            <person name="Grivell L.A."/>
            <person name="Rieger M."/>
            <person name="Weichselgartner M."/>
            <person name="de Simone V."/>
            <person name="Obermaier B."/>
            <person name="Mache R."/>
            <person name="Mueller M."/>
            <person name="Kreis M."/>
            <person name="Delseny M."/>
            <person name="Puigdomenech P."/>
            <person name="Watson M."/>
            <person name="Schmidtheini T."/>
            <person name="Reichert B."/>
            <person name="Portetelle D."/>
            <person name="Perez-Alonso M."/>
            <person name="Boutry M."/>
            <person name="Bancroft I."/>
            <person name="Vos P."/>
            <person name="Hoheisel J."/>
            <person name="Zimmermann W."/>
            <person name="Wedler H."/>
            <person name="Ridley P."/>
            <person name="Langham S.-A."/>
            <person name="McCullagh B."/>
            <person name="Bilham L."/>
            <person name="Robben J."/>
            <person name="van der Schueren J."/>
            <person name="Grymonprez B."/>
            <person name="Chuang Y.-J."/>
            <person name="Vandenbussche F."/>
            <person name="Braeken M."/>
            <person name="Weltjens I."/>
            <person name="Voet M."/>
            <person name="Bastiaens I."/>
            <person name="Aert R."/>
            <person name="Defoor E."/>
            <person name="Weitzenegger T."/>
            <person name="Bothe G."/>
            <person name="Ramsperger U."/>
            <person name="Hilbert H."/>
            <person name="Braun M."/>
            <person name="Holzer E."/>
            <person name="Brandt A."/>
            <person name="Peters S."/>
            <person name="van Staveren M."/>
            <person name="Dirkse W."/>
            <person name="Mooijman P."/>
            <person name="Klein Lankhorst R."/>
            <person name="Rose M."/>
            <person name="Hauf J."/>
            <person name="Koetter P."/>
            <person name="Berneiser S."/>
            <person name="Hempel S."/>
            <person name="Feldpausch M."/>
            <person name="Lamberth S."/>
            <person name="Van den Daele H."/>
            <person name="De Keyser A."/>
            <person name="Buysshaert C."/>
            <person name="Gielen J."/>
            <person name="Villarroel R."/>
            <person name="De Clercq R."/>
            <person name="van Montagu M."/>
            <person name="Rogers J."/>
            <person name="Cronin A."/>
            <person name="Quail M.A."/>
            <person name="Bray-Allen S."/>
            <person name="Clark L."/>
            <person name="Doggett J."/>
            <person name="Hall S."/>
            <person name="Kay M."/>
            <person name="Lennard N."/>
            <person name="McLay K."/>
            <person name="Mayes R."/>
            <person name="Pettett A."/>
            <person name="Rajandream M.A."/>
            <person name="Lyne M."/>
            <person name="Benes V."/>
            <person name="Rechmann S."/>
            <person name="Borkova D."/>
            <person name="Bloecker H."/>
            <person name="Scharfe M."/>
            <person name="Grimm M."/>
            <person name="Loehnert T.-H."/>
            <person name="Dose S."/>
            <person name="de Haan M."/>
            <person name="Maarse A.C."/>
            <person name="Schaefer M."/>
            <person name="Mueller-Auer S."/>
            <person name="Gabel C."/>
            <person name="Fuchs M."/>
            <person name="Fartmann B."/>
            <person name="Granderath K."/>
            <person name="Dauner D."/>
            <person name="Herzl A."/>
            <person name="Neumann S."/>
            <person name="Argiriou A."/>
            <person name="Vitale D."/>
            <person name="Liguori R."/>
            <person name="Piravandi E."/>
            <person name="Massenet O."/>
            <person name="Quigley F."/>
            <person name="Clabauld G."/>
            <person name="Muendlein A."/>
            <person name="Felber R."/>
            <person name="Schnabl S."/>
            <person name="Hiller R."/>
            <person name="Schmidt W."/>
            <person name="Lecharny A."/>
            <person name="Aubourg S."/>
            <person name="Chefdor F."/>
            <person name="Cooke R."/>
            <person name="Berger C."/>
            <person name="Monfort A."/>
            <person name="Casacuberta E."/>
            <person name="Gibbons T."/>
            <person name="Weber N."/>
            <person name="Vandenbol M."/>
            <person name="Bargues M."/>
            <person name="Terol J."/>
            <person name="Torres A."/>
            <person name="Perez-Perez A."/>
            <person name="Purnelle B."/>
            <person name="Bent E."/>
            <person name="Johnson S."/>
            <person name="Tacon D."/>
            <person name="Jesse T."/>
            <person name="Heijnen L."/>
            <person name="Schwarz S."/>
            <person name="Scholler P."/>
            <person name="Heber S."/>
            <person name="Francs P."/>
            <person name="Bielke C."/>
            <person name="Frishman D."/>
            <person name="Haase D."/>
            <person name="Lemcke K."/>
            <person name="Mewes H.-W."/>
            <person name="Stocker S."/>
            <person name="Zaccaria P."/>
            <person name="Bevan M."/>
            <person name="Wilson R.K."/>
            <person name="de la Bastide M."/>
            <person name="Habermann K."/>
            <person name="Parnell L."/>
            <person name="Dedhia N."/>
            <person name="Gnoj L."/>
            <person name="Schutz K."/>
            <person name="Huang E."/>
            <person name="Spiegel L."/>
            <person name="Sekhon M."/>
            <person name="Murray J."/>
            <person name="Sheet P."/>
            <person name="Cordes M."/>
            <person name="Abu-Threideh J."/>
            <person name="Stoneking T."/>
            <person name="Kalicki J."/>
            <person name="Graves T."/>
            <person name="Harmon G."/>
            <person name="Edwards J."/>
            <person name="Latreille P."/>
            <person name="Courtney L."/>
            <person name="Cloud J."/>
            <person name="Abbott A."/>
            <person name="Scott K."/>
            <person name="Johnson D."/>
            <person name="Minx P."/>
            <person name="Bentley D."/>
            <person name="Fulton B."/>
            <person name="Miller N."/>
            <person name="Greco T."/>
            <person name="Kemp K."/>
            <person name="Kramer J."/>
            <person name="Fulton L."/>
            <person name="Mardis E."/>
            <person name="Dante M."/>
            <person name="Pepin K."/>
            <person name="Hillier L.W."/>
            <person name="Nelson J."/>
            <person name="Spieth J."/>
            <person name="Ryan E."/>
            <person name="Andrews S."/>
            <person name="Geisel C."/>
            <person name="Layman D."/>
            <person name="Du H."/>
            <person name="Ali J."/>
            <person name="Berghoff A."/>
            <person name="Jones K."/>
            <person name="Drone K."/>
            <person name="Cotton M."/>
            <person name="Joshu C."/>
            <person name="Antonoiu B."/>
            <person name="Zidanic M."/>
            <person name="Strong C."/>
            <person name="Sun H."/>
            <person name="Lamar B."/>
            <person name="Yordan C."/>
            <person name="Ma P."/>
            <person name="Zhong J."/>
            <person name="Preston R."/>
            <person name="Vil D."/>
            <person name="Shekher M."/>
            <person name="Matero A."/>
            <person name="Shah R."/>
            <person name="Swaby I.K."/>
            <person name="O'Shaughnessy A."/>
            <person name="Rodriguez M."/>
            <person name="Hoffman J."/>
            <person name="Till S."/>
            <person name="Granat S."/>
            <person name="Shohdy N."/>
            <person name="Hasegawa A."/>
            <person name="Hameed A."/>
            <person name="Lodhi M."/>
            <person name="Johnson A."/>
            <person name="Chen E."/>
            <person name="Marra M.A."/>
            <person name="Martienssen R."/>
            <person name="McCombie W.R."/>
        </authorList>
    </citation>
    <scope>NUCLEOTIDE SEQUENCE [LARGE SCALE GENOMIC DNA]</scope>
    <source>
        <strain>cv. Columbia</strain>
    </source>
</reference>
<reference key="3">
    <citation type="journal article" date="2017" name="Plant J.">
        <title>Araport11: a complete reannotation of the Arabidopsis thaliana reference genome.</title>
        <authorList>
            <person name="Cheng C.Y."/>
            <person name="Krishnakumar V."/>
            <person name="Chan A.P."/>
            <person name="Thibaud-Nissen F."/>
            <person name="Schobel S."/>
            <person name="Town C.D."/>
        </authorList>
    </citation>
    <scope>GENOME REANNOTATION</scope>
    <source>
        <strain>cv. Columbia</strain>
    </source>
</reference>
<reference key="4">
    <citation type="journal article" date="2002" name="Science">
        <title>Functional annotation of a full-length Arabidopsis cDNA collection.</title>
        <authorList>
            <person name="Seki M."/>
            <person name="Narusaka M."/>
            <person name="Kamiya A."/>
            <person name="Ishida J."/>
            <person name="Satou M."/>
            <person name="Sakurai T."/>
            <person name="Nakajima M."/>
            <person name="Enju A."/>
            <person name="Akiyama K."/>
            <person name="Oono Y."/>
            <person name="Muramatsu M."/>
            <person name="Hayashizaki Y."/>
            <person name="Kawai J."/>
            <person name="Carninci P."/>
            <person name="Itoh M."/>
            <person name="Ishii Y."/>
            <person name="Arakawa T."/>
            <person name="Shibata K."/>
            <person name="Shinagawa A."/>
            <person name="Shinozaki K."/>
        </authorList>
    </citation>
    <scope>NUCLEOTIDE SEQUENCE [LARGE SCALE MRNA] (ISOFORM 2)</scope>
    <source>
        <strain>cv. Columbia</strain>
    </source>
</reference>
<reference key="5">
    <citation type="journal article" date="2002" name="Planta">
        <title>The plant PDR family of ABC transporters.</title>
        <authorList>
            <person name="van den Brule S."/>
            <person name="Smart C.C."/>
        </authorList>
    </citation>
    <scope>IDENTIFICATION</scope>
    <scope>TISSUE SPECIFICITY</scope>
    <scope>INDUCTION</scope>
</reference>
<reference key="6">
    <citation type="journal article" date="2006" name="FEBS Lett.">
        <title>Organization and function of the plant pleiotropic drug resistance ABC transporter family.</title>
        <authorList>
            <person name="Crouzet J."/>
            <person name="Trombik T."/>
            <person name="Fraysse A.S."/>
            <person name="Boutry M."/>
        </authorList>
    </citation>
    <scope>GENE FAMILY</scope>
    <scope>NOMENCLATURE</scope>
</reference>
<reference key="7">
    <citation type="journal article" date="2008" name="Trends Plant Sci.">
        <title>Plant ABC proteins - a unified nomenclature and updated inventory.</title>
        <authorList>
            <person name="Verrier P.J."/>
            <person name="Bird D."/>
            <person name="Burla B."/>
            <person name="Dassa E."/>
            <person name="Forestier C."/>
            <person name="Geisler M."/>
            <person name="Klein M."/>
            <person name="Kolukisaoglu H.U."/>
            <person name="Lee Y."/>
            <person name="Martinoia E."/>
            <person name="Murphy A."/>
            <person name="Rea P.A."/>
            <person name="Samuels L."/>
            <person name="Schulz B."/>
            <person name="Spalding E.J."/>
            <person name="Yazaki K."/>
            <person name="Theodoulou F.L."/>
        </authorList>
    </citation>
    <scope>GENE FAMILY</scope>
    <scope>NOMENCLATURE</scope>
</reference>
<reference key="8">
    <citation type="journal article" date="2009" name="Plant Physiol.">
        <title>An ABC transporter mutation alters root exudation of phytochemicals that provoke an overhaul of natural soil microbiota.</title>
        <authorList>
            <person name="Badri D.V."/>
            <person name="Quintana N."/>
            <person name="El Kassis E.G."/>
            <person name="Kim H.K."/>
            <person name="Choi Y.H."/>
            <person name="Sugiyama A."/>
            <person name="Verpoorte R."/>
            <person name="Martinoia E."/>
            <person name="Manter D.K."/>
            <person name="Vivanco J.M."/>
        </authorList>
    </citation>
    <scope>FUNCTION</scope>
    <scope>DISRUPTION PHENOTYPE</scope>
    <source>
        <strain>cv. Columbia</strain>
    </source>
</reference>
<reference key="9">
    <citation type="journal article" date="2015" name="Nat. Commun.">
        <title>Abscisic acid transporters cooperate to control seed germination.</title>
        <authorList>
            <person name="Kang J."/>
            <person name="Yim S."/>
            <person name="Choi H."/>
            <person name="Kim A."/>
            <person name="Lee K.P."/>
            <person name="Lopez-Molina L."/>
            <person name="Martinoia E."/>
            <person name="Lee Y."/>
        </authorList>
    </citation>
    <scope>FUNCTION</scope>
    <scope>DISRUPTION PHENOTYPE</scope>
    <scope>CATALYTIC ACTIVITY</scope>
    <scope>TISSUE SPECIFICITY</scope>
    <scope>SUBCELLULAR LOCATION</scope>
    <source>
        <strain>cv. Columbia</strain>
    </source>
</reference>